<proteinExistence type="inferred from homology"/>
<gene>
    <name evidence="2" type="primary">ribH1</name>
    <name type="synonym">ribE</name>
    <name type="synonym">ribH-1</name>
    <name type="ordered locus">BR0769</name>
    <name type="ordered locus">BS1330_I0765</name>
</gene>
<comment type="function">
    <text evidence="2">Catalyzes the formation of 6,7-dimethyl-8-ribityllumazine by condensation of 5-amino-6-(D-ribitylamino)uracil with 3,4-dihydroxy-2-butanone 4-phosphate. This is the penultimate step in the biosynthesis of riboflavin.</text>
</comment>
<comment type="catalytic activity">
    <reaction evidence="2">
        <text>(2S)-2-hydroxy-3-oxobutyl phosphate + 5-amino-6-(D-ribitylamino)uracil = 6,7-dimethyl-8-(1-D-ribityl)lumazine + phosphate + 2 H2O + H(+)</text>
        <dbReference type="Rhea" id="RHEA:26152"/>
        <dbReference type="ChEBI" id="CHEBI:15377"/>
        <dbReference type="ChEBI" id="CHEBI:15378"/>
        <dbReference type="ChEBI" id="CHEBI:15934"/>
        <dbReference type="ChEBI" id="CHEBI:43474"/>
        <dbReference type="ChEBI" id="CHEBI:58201"/>
        <dbReference type="ChEBI" id="CHEBI:58830"/>
        <dbReference type="EC" id="2.5.1.78"/>
    </reaction>
</comment>
<comment type="pathway">
    <text evidence="2">Cofactor biosynthesis; riboflavin biosynthesis; riboflavin from 2-hydroxy-3-oxobutyl phosphate and 5-amino-6-(D-ribitylamino)uracil: step 1/2.</text>
</comment>
<comment type="induction">
    <text evidence="1">The two ribH genes may be differentially expressed during the Brucella infection cycle. Brucella would use RibH1 for flavin biosynthesis during the extracellular phase and RibH2 during intracellular growth (By similarity).</text>
</comment>
<comment type="similarity">
    <text evidence="2">Belongs to the DMRL synthase family.</text>
</comment>
<protein>
    <recommendedName>
        <fullName evidence="2">6,7-dimethyl-8-ribityllumazine synthase 1</fullName>
        <shortName evidence="2">DMRL synthase 1</shortName>
        <shortName evidence="2">LS 1</shortName>
        <shortName evidence="2">Lumazine synthase 1</shortName>
        <ecNumber evidence="2">2.5.1.78</ecNumber>
    </recommendedName>
</protein>
<dbReference type="EC" id="2.5.1.78" evidence="2"/>
<dbReference type="EMBL" id="AE014291">
    <property type="protein sequence ID" value="AAN29698.1"/>
    <property type="molecule type" value="Genomic_DNA"/>
</dbReference>
<dbReference type="EMBL" id="CP002997">
    <property type="protein sequence ID" value="AEM18115.1"/>
    <property type="molecule type" value="Genomic_DNA"/>
</dbReference>
<dbReference type="SMR" id="Q8G1E8"/>
<dbReference type="KEGG" id="bms:BR0769"/>
<dbReference type="KEGG" id="bsi:BS1330_I0765"/>
<dbReference type="HOGENOM" id="CLU_089358_1_2_5"/>
<dbReference type="UniPathway" id="UPA00275">
    <property type="reaction ID" value="UER00404"/>
</dbReference>
<dbReference type="Proteomes" id="UP000007104">
    <property type="component" value="Chromosome I"/>
</dbReference>
<dbReference type="GO" id="GO:0005829">
    <property type="term" value="C:cytosol"/>
    <property type="evidence" value="ECO:0007669"/>
    <property type="project" value="TreeGrafter"/>
</dbReference>
<dbReference type="GO" id="GO:0009349">
    <property type="term" value="C:riboflavin synthase complex"/>
    <property type="evidence" value="ECO:0007669"/>
    <property type="project" value="InterPro"/>
</dbReference>
<dbReference type="GO" id="GO:0000906">
    <property type="term" value="F:6,7-dimethyl-8-ribityllumazine synthase activity"/>
    <property type="evidence" value="ECO:0007669"/>
    <property type="project" value="UniProtKB-UniRule"/>
</dbReference>
<dbReference type="GO" id="GO:0009231">
    <property type="term" value="P:riboflavin biosynthetic process"/>
    <property type="evidence" value="ECO:0007669"/>
    <property type="project" value="UniProtKB-UniRule"/>
</dbReference>
<dbReference type="CDD" id="cd09209">
    <property type="entry name" value="Lumazine_synthase-I"/>
    <property type="match status" value="1"/>
</dbReference>
<dbReference type="Gene3D" id="3.40.50.960">
    <property type="entry name" value="Lumazine/riboflavin synthase"/>
    <property type="match status" value="1"/>
</dbReference>
<dbReference type="HAMAP" id="MF_00178">
    <property type="entry name" value="Lumazine_synth"/>
    <property type="match status" value="1"/>
</dbReference>
<dbReference type="InterPro" id="IPR034964">
    <property type="entry name" value="LS"/>
</dbReference>
<dbReference type="InterPro" id="IPR002180">
    <property type="entry name" value="LS/RS"/>
</dbReference>
<dbReference type="InterPro" id="IPR036467">
    <property type="entry name" value="LS/RS_sf"/>
</dbReference>
<dbReference type="NCBIfam" id="TIGR00114">
    <property type="entry name" value="lumazine-synth"/>
    <property type="match status" value="1"/>
</dbReference>
<dbReference type="NCBIfam" id="NF000814">
    <property type="entry name" value="PRK00061.2-2"/>
    <property type="match status" value="1"/>
</dbReference>
<dbReference type="PANTHER" id="PTHR21058:SF0">
    <property type="entry name" value="6,7-DIMETHYL-8-RIBITYLLUMAZINE SYNTHASE"/>
    <property type="match status" value="1"/>
</dbReference>
<dbReference type="PANTHER" id="PTHR21058">
    <property type="entry name" value="6,7-DIMETHYL-8-RIBITYLLUMAZINE SYNTHASE DMRL SYNTHASE LUMAZINE SYNTHASE"/>
    <property type="match status" value="1"/>
</dbReference>
<dbReference type="Pfam" id="PF00885">
    <property type="entry name" value="DMRL_synthase"/>
    <property type="match status" value="1"/>
</dbReference>
<dbReference type="SUPFAM" id="SSF52121">
    <property type="entry name" value="Lumazine synthase"/>
    <property type="match status" value="1"/>
</dbReference>
<organism>
    <name type="scientific">Brucella suis biovar 1 (strain 1330)</name>
    <dbReference type="NCBI Taxonomy" id="204722"/>
    <lineage>
        <taxon>Bacteria</taxon>
        <taxon>Pseudomonadati</taxon>
        <taxon>Pseudomonadota</taxon>
        <taxon>Alphaproteobacteria</taxon>
        <taxon>Hyphomicrobiales</taxon>
        <taxon>Brucellaceae</taxon>
        <taxon>Brucella/Ochrobactrum group</taxon>
        <taxon>Brucella</taxon>
    </lineage>
</organism>
<reference key="1">
    <citation type="journal article" date="2002" name="Proc. Natl. Acad. Sci. U.S.A.">
        <title>The Brucella suis genome reveals fundamental similarities between animal and plant pathogens and symbionts.</title>
        <authorList>
            <person name="Paulsen I.T."/>
            <person name="Seshadri R."/>
            <person name="Nelson K.E."/>
            <person name="Eisen J.A."/>
            <person name="Heidelberg J.F."/>
            <person name="Read T.D."/>
            <person name="Dodson R.J."/>
            <person name="Umayam L.A."/>
            <person name="Brinkac L.M."/>
            <person name="Beanan M.J."/>
            <person name="Daugherty S.C."/>
            <person name="DeBoy R.T."/>
            <person name="Durkin A.S."/>
            <person name="Kolonay J.F."/>
            <person name="Madupu R."/>
            <person name="Nelson W.C."/>
            <person name="Ayodeji B."/>
            <person name="Kraul M."/>
            <person name="Shetty J."/>
            <person name="Malek J.A."/>
            <person name="Van Aken S.E."/>
            <person name="Riedmuller S."/>
            <person name="Tettelin H."/>
            <person name="Gill S.R."/>
            <person name="White O."/>
            <person name="Salzberg S.L."/>
            <person name="Hoover D.L."/>
            <person name="Lindler L.E."/>
            <person name="Halling S.M."/>
            <person name="Boyle S.M."/>
            <person name="Fraser C.M."/>
        </authorList>
    </citation>
    <scope>NUCLEOTIDE SEQUENCE [LARGE SCALE GENOMIC DNA]</scope>
    <source>
        <strain>1330</strain>
    </source>
</reference>
<reference key="2">
    <citation type="journal article" date="2011" name="J. Bacteriol.">
        <title>Revised genome sequence of Brucella suis 1330.</title>
        <authorList>
            <person name="Tae H."/>
            <person name="Shallom S."/>
            <person name="Settlage R."/>
            <person name="Preston D."/>
            <person name="Adams L.G."/>
            <person name="Garner H.R."/>
        </authorList>
    </citation>
    <scope>NUCLEOTIDE SEQUENCE [LARGE SCALE GENOMIC DNA]</scope>
    <source>
        <strain>1330</strain>
    </source>
</reference>
<evidence type="ECO:0000250" key="1"/>
<evidence type="ECO:0000255" key="2">
    <source>
        <dbReference type="HAMAP-Rule" id="MF_00178"/>
    </source>
</evidence>
<feature type="chain" id="PRO_0000134728" description="6,7-dimethyl-8-ribityllumazine synthase 1">
    <location>
        <begin position="1"/>
        <end position="157"/>
    </location>
</feature>
<feature type="active site" description="Proton donor" evidence="2">
    <location>
        <position position="90"/>
    </location>
</feature>
<feature type="binding site" evidence="2">
    <location>
        <position position="22"/>
    </location>
    <ligand>
        <name>5-amino-6-(D-ribitylamino)uracil</name>
        <dbReference type="ChEBI" id="CHEBI:15934"/>
    </ligand>
</feature>
<feature type="binding site" evidence="2">
    <location>
        <begin position="53"/>
        <end position="55"/>
    </location>
    <ligand>
        <name>5-amino-6-(D-ribitylamino)uracil</name>
        <dbReference type="ChEBI" id="CHEBI:15934"/>
    </ligand>
</feature>
<feature type="binding site" evidence="2">
    <location>
        <begin position="82"/>
        <end position="84"/>
    </location>
    <ligand>
        <name>5-amino-6-(D-ribitylamino)uracil</name>
        <dbReference type="ChEBI" id="CHEBI:15934"/>
    </ligand>
</feature>
<feature type="binding site" evidence="2">
    <location>
        <begin position="87"/>
        <end position="88"/>
    </location>
    <ligand>
        <name>(2S)-2-hydroxy-3-oxobutyl phosphate</name>
        <dbReference type="ChEBI" id="CHEBI:58830"/>
    </ligand>
</feature>
<feature type="binding site" evidence="2">
    <location>
        <position position="115"/>
    </location>
    <ligand>
        <name>5-amino-6-(D-ribitylamino)uracil</name>
        <dbReference type="ChEBI" id="CHEBI:15934"/>
    </ligand>
</feature>
<feature type="binding site" evidence="2">
    <location>
        <position position="129"/>
    </location>
    <ligand>
        <name>(2S)-2-hydroxy-3-oxobutyl phosphate</name>
        <dbReference type="ChEBI" id="CHEBI:58830"/>
    </ligand>
</feature>
<name>RISB1_BRUSU</name>
<keyword id="KW-0686">Riboflavin biosynthesis</keyword>
<keyword id="KW-0808">Transferase</keyword>
<accession>Q8G1E8</accession>
<accession>G0K8I8</accession>
<sequence length="157" mass="16796">MDFLMSKHEADAPHLLIVEARFYDDLADALLDGAKAALDEAGATYDVVTVPGALEIPATISFALDGADNGGTEYDGFVALGTVIRGETYHFDIVSNESCRALTDLSVEESIAIGNGILTVENEEQAWVRARREDKDKGGFAARAALTMIGLRKKFGA</sequence>